<sequence length="364" mass="41160">MQERHTEQDYRALLIADTPIIDVRAPIEFEQGAMPAAINLPLMNNDERAAVGTCYKQQGSDAALALGHKLVAGEIRQQRMDAWRAACLQNPQGILCCARGGQRSHIVQSWLYAAGIDYPLVEGGYKALRQAAIQATIELAQKPIVLIGGCTGSGKTLLVQQQPNGVDLEGLARHRGSAFGRTLQPQLSQASFENLLAAEMLKTDARQDLRLWVLEDESRMIGSNHLPECLRERMTQAAIAVVEDPFEIRLERLNEEYFLRMHHDFTHAYGDEQGWQEYCEYLHHGLSAIKRRLGLQRYNELAAQLDTALTTQLTTDSTDGHLAWLVPLLKEYYDPMYRYQLEKKAEKVVFRGEWAEVAEWVKTQ</sequence>
<name>SELU_SHISS</name>
<reference key="1">
    <citation type="journal article" date="2005" name="Nucleic Acids Res.">
        <title>Genome dynamics and diversity of Shigella species, the etiologic agents of bacillary dysentery.</title>
        <authorList>
            <person name="Yang F."/>
            <person name="Yang J."/>
            <person name="Zhang X."/>
            <person name="Chen L."/>
            <person name="Jiang Y."/>
            <person name="Yan Y."/>
            <person name="Tang X."/>
            <person name="Wang J."/>
            <person name="Xiong Z."/>
            <person name="Dong J."/>
            <person name="Xue Y."/>
            <person name="Zhu Y."/>
            <person name="Xu X."/>
            <person name="Sun L."/>
            <person name="Chen S."/>
            <person name="Nie H."/>
            <person name="Peng J."/>
            <person name="Xu J."/>
            <person name="Wang Y."/>
            <person name="Yuan Z."/>
            <person name="Wen Y."/>
            <person name="Yao Z."/>
            <person name="Shen Y."/>
            <person name="Qiang B."/>
            <person name="Hou Y."/>
            <person name="Yu J."/>
            <person name="Jin Q."/>
        </authorList>
    </citation>
    <scope>NUCLEOTIDE SEQUENCE [LARGE SCALE GENOMIC DNA]</scope>
    <source>
        <strain>Ss046</strain>
    </source>
</reference>
<dbReference type="EC" id="2.9.1.3" evidence="1"/>
<dbReference type="EMBL" id="CP000038">
    <property type="protein sequence ID" value="AAZ87262.1"/>
    <property type="molecule type" value="Genomic_DNA"/>
</dbReference>
<dbReference type="SMR" id="Q3Z4Q0"/>
<dbReference type="KEGG" id="ssn:SSON_0486"/>
<dbReference type="HOGENOM" id="CLU_043456_1_0_6"/>
<dbReference type="Proteomes" id="UP000002529">
    <property type="component" value="Chromosome"/>
</dbReference>
<dbReference type="GO" id="GO:0016765">
    <property type="term" value="F:transferase activity, transferring alkyl or aryl (other than methyl) groups"/>
    <property type="evidence" value="ECO:0007669"/>
    <property type="project" value="UniProtKB-UniRule"/>
</dbReference>
<dbReference type="GO" id="GO:0043828">
    <property type="term" value="F:tRNA 2-selenouridine synthase activity"/>
    <property type="evidence" value="ECO:0007669"/>
    <property type="project" value="UniProtKB-EC"/>
</dbReference>
<dbReference type="GO" id="GO:0002098">
    <property type="term" value="P:tRNA wobble uridine modification"/>
    <property type="evidence" value="ECO:0007669"/>
    <property type="project" value="UniProtKB-UniRule"/>
</dbReference>
<dbReference type="CDD" id="cd01520">
    <property type="entry name" value="RHOD_YbbB"/>
    <property type="match status" value="1"/>
</dbReference>
<dbReference type="FunFam" id="3.40.250.10:FF:000009">
    <property type="entry name" value="tRNA 2-selenouridine/geranyl-2-thiouridine synthase"/>
    <property type="match status" value="1"/>
</dbReference>
<dbReference type="Gene3D" id="3.40.250.10">
    <property type="entry name" value="Rhodanese-like domain"/>
    <property type="match status" value="1"/>
</dbReference>
<dbReference type="HAMAP" id="MF_01622">
    <property type="entry name" value="tRNA_sel_U_synth"/>
    <property type="match status" value="1"/>
</dbReference>
<dbReference type="InterPro" id="IPR027417">
    <property type="entry name" value="P-loop_NTPase"/>
</dbReference>
<dbReference type="InterPro" id="IPR001763">
    <property type="entry name" value="Rhodanese-like_dom"/>
</dbReference>
<dbReference type="InterPro" id="IPR036873">
    <property type="entry name" value="Rhodanese-like_dom_sf"/>
</dbReference>
<dbReference type="InterPro" id="IPR017582">
    <property type="entry name" value="SelU"/>
</dbReference>
<dbReference type="NCBIfam" id="NF008749">
    <property type="entry name" value="PRK11784.1-1"/>
    <property type="match status" value="1"/>
</dbReference>
<dbReference type="NCBIfam" id="NF008751">
    <property type="entry name" value="PRK11784.1-3"/>
    <property type="match status" value="1"/>
</dbReference>
<dbReference type="NCBIfam" id="TIGR03167">
    <property type="entry name" value="tRNA_sel_U_synt"/>
    <property type="match status" value="1"/>
</dbReference>
<dbReference type="PANTHER" id="PTHR30401">
    <property type="entry name" value="TRNA 2-SELENOURIDINE SYNTHASE"/>
    <property type="match status" value="1"/>
</dbReference>
<dbReference type="PANTHER" id="PTHR30401:SF0">
    <property type="entry name" value="TRNA 2-SELENOURIDINE SYNTHASE"/>
    <property type="match status" value="1"/>
</dbReference>
<dbReference type="SMART" id="SM00450">
    <property type="entry name" value="RHOD"/>
    <property type="match status" value="1"/>
</dbReference>
<dbReference type="SUPFAM" id="SSF52540">
    <property type="entry name" value="P-loop containing nucleoside triphosphate hydrolases"/>
    <property type="match status" value="1"/>
</dbReference>
<dbReference type="SUPFAM" id="SSF52821">
    <property type="entry name" value="Rhodanese/Cell cycle control phosphatase"/>
    <property type="match status" value="1"/>
</dbReference>
<dbReference type="PROSITE" id="PS50206">
    <property type="entry name" value="RHODANESE_3"/>
    <property type="match status" value="1"/>
</dbReference>
<protein>
    <recommendedName>
        <fullName evidence="1">tRNA 2-selenouridine synthase</fullName>
        <ecNumber evidence="1">2.9.1.3</ecNumber>
    </recommendedName>
</protein>
<accession>Q3Z4Q0</accession>
<comment type="function">
    <text evidence="1">Involved in the post-transcriptional modification of the uridine at the wobble position (U34) of tRNA(Lys), tRNA(Glu) and tRNA(Gln). Catalyzes the conversion of 2-thiouridine (S2U-RNA) to 2-selenouridine (Se2U-RNA). Acts in a two-step process involving geranylation of 2-thiouridine (S2U) to S-geranyl-2-thiouridine (geS2U) and subsequent selenation of the latter derivative to 2-selenouridine (Se2U) in the tRNA chain.</text>
</comment>
<comment type="catalytic activity">
    <reaction evidence="1">
        <text>5-methylaminomethyl-2-thiouridine(34) in tRNA + selenophosphate + (2E)-geranyl diphosphate + H2O + H(+) = 5-methylaminomethyl-2-selenouridine(34) in tRNA + (2E)-thiogeraniol + phosphate + diphosphate</text>
        <dbReference type="Rhea" id="RHEA:42716"/>
        <dbReference type="Rhea" id="RHEA-COMP:10195"/>
        <dbReference type="Rhea" id="RHEA-COMP:10196"/>
        <dbReference type="ChEBI" id="CHEBI:15377"/>
        <dbReference type="ChEBI" id="CHEBI:15378"/>
        <dbReference type="ChEBI" id="CHEBI:16144"/>
        <dbReference type="ChEBI" id="CHEBI:33019"/>
        <dbReference type="ChEBI" id="CHEBI:43474"/>
        <dbReference type="ChEBI" id="CHEBI:58057"/>
        <dbReference type="ChEBI" id="CHEBI:74455"/>
        <dbReference type="ChEBI" id="CHEBI:82743"/>
        <dbReference type="ChEBI" id="CHEBI:143703"/>
        <dbReference type="EC" id="2.9.1.3"/>
    </reaction>
    <physiologicalReaction direction="left-to-right" evidence="1">
        <dbReference type="Rhea" id="RHEA:42717"/>
    </physiologicalReaction>
</comment>
<comment type="catalytic activity">
    <reaction evidence="1">
        <text>5-methylaminomethyl-2-thiouridine(34) in tRNA + (2E)-geranyl diphosphate = 5-methylaminomethyl-S-(2E)-geranyl-thiouridine(34) in tRNA + diphosphate</text>
        <dbReference type="Rhea" id="RHEA:14085"/>
        <dbReference type="Rhea" id="RHEA-COMP:10195"/>
        <dbReference type="Rhea" id="RHEA-COMP:14654"/>
        <dbReference type="ChEBI" id="CHEBI:33019"/>
        <dbReference type="ChEBI" id="CHEBI:58057"/>
        <dbReference type="ChEBI" id="CHEBI:74455"/>
        <dbReference type="ChEBI" id="CHEBI:140632"/>
    </reaction>
    <physiologicalReaction direction="left-to-right" evidence="1">
        <dbReference type="Rhea" id="RHEA:14086"/>
    </physiologicalReaction>
</comment>
<comment type="catalytic activity">
    <reaction evidence="1">
        <text>5-methylaminomethyl-S-(2E)-geranyl-thiouridine(34) in tRNA + selenophosphate + H(+) = 5-methylaminomethyl-2-(Se-phospho)selenouridine(34) in tRNA + (2E)-thiogeraniol</text>
        <dbReference type="Rhea" id="RHEA:60172"/>
        <dbReference type="Rhea" id="RHEA-COMP:14654"/>
        <dbReference type="Rhea" id="RHEA-COMP:15523"/>
        <dbReference type="ChEBI" id="CHEBI:15378"/>
        <dbReference type="ChEBI" id="CHEBI:16144"/>
        <dbReference type="ChEBI" id="CHEBI:140632"/>
        <dbReference type="ChEBI" id="CHEBI:143702"/>
        <dbReference type="ChEBI" id="CHEBI:143703"/>
    </reaction>
    <physiologicalReaction direction="left-to-right" evidence="1">
        <dbReference type="Rhea" id="RHEA:60173"/>
    </physiologicalReaction>
</comment>
<comment type="catalytic activity">
    <reaction evidence="1">
        <text>5-methylaminomethyl-2-(Se-phospho)selenouridine(34) in tRNA + H2O = 5-methylaminomethyl-2-selenouridine(34) in tRNA + phosphate</text>
        <dbReference type="Rhea" id="RHEA:60176"/>
        <dbReference type="Rhea" id="RHEA-COMP:10196"/>
        <dbReference type="Rhea" id="RHEA-COMP:15523"/>
        <dbReference type="ChEBI" id="CHEBI:15377"/>
        <dbReference type="ChEBI" id="CHEBI:43474"/>
        <dbReference type="ChEBI" id="CHEBI:82743"/>
        <dbReference type="ChEBI" id="CHEBI:143702"/>
    </reaction>
    <physiologicalReaction direction="left-to-right" evidence="1">
        <dbReference type="Rhea" id="RHEA:60177"/>
    </physiologicalReaction>
</comment>
<comment type="subunit">
    <text evidence="1">Monomer.</text>
</comment>
<comment type="similarity">
    <text evidence="1">Belongs to the SelU family.</text>
</comment>
<evidence type="ECO:0000255" key="1">
    <source>
        <dbReference type="HAMAP-Rule" id="MF_01622"/>
    </source>
</evidence>
<gene>
    <name evidence="1" type="primary">selU</name>
    <name type="ordered locus">SSON_0486</name>
</gene>
<proteinExistence type="inferred from homology"/>
<organism>
    <name type="scientific">Shigella sonnei (strain Ss046)</name>
    <dbReference type="NCBI Taxonomy" id="300269"/>
    <lineage>
        <taxon>Bacteria</taxon>
        <taxon>Pseudomonadati</taxon>
        <taxon>Pseudomonadota</taxon>
        <taxon>Gammaproteobacteria</taxon>
        <taxon>Enterobacterales</taxon>
        <taxon>Enterobacteriaceae</taxon>
        <taxon>Shigella</taxon>
    </lineage>
</organism>
<keyword id="KW-1185">Reference proteome</keyword>
<keyword id="KW-0711">Selenium</keyword>
<keyword id="KW-0808">Transferase</keyword>
<feature type="chain" id="PRO_0000210878" description="tRNA 2-selenouridine synthase">
    <location>
        <begin position="1"/>
        <end position="364"/>
    </location>
</feature>
<feature type="domain" description="Rhodanese" evidence="1">
    <location>
        <begin position="14"/>
        <end position="137"/>
    </location>
</feature>
<feature type="active site" description="S-selanylcysteine intermediate" evidence="1">
    <location>
        <position position="97"/>
    </location>
</feature>